<accession>Q1RH98</accession>
<feature type="chain" id="PRO_0000277936" description="UPF0335 protein RBE_1185">
    <location>
        <begin position="1"/>
        <end position="78"/>
    </location>
</feature>
<proteinExistence type="inferred from homology"/>
<reference key="1">
    <citation type="journal article" date="2006" name="PLoS Genet.">
        <title>Genome sequence of Rickettsia bellii illuminates the role of amoebae in gene exchanges between intracellular pathogens.</title>
        <authorList>
            <person name="Ogata H."/>
            <person name="La Scola B."/>
            <person name="Audic S."/>
            <person name="Renesto P."/>
            <person name="Blanc G."/>
            <person name="Robert C."/>
            <person name="Fournier P.-E."/>
            <person name="Claverie J.-M."/>
            <person name="Raoult D."/>
        </authorList>
    </citation>
    <scope>NUCLEOTIDE SEQUENCE [LARGE SCALE GENOMIC DNA]</scope>
    <source>
        <strain>RML369-C</strain>
    </source>
</reference>
<evidence type="ECO:0000255" key="1">
    <source>
        <dbReference type="HAMAP-Rule" id="MF_00797"/>
    </source>
</evidence>
<gene>
    <name type="ordered locus">RBE_1185</name>
</gene>
<protein>
    <recommendedName>
        <fullName evidence="1">UPF0335 protein RBE_1185</fullName>
    </recommendedName>
</protein>
<sequence>MSEVVVKEQLEQYLSKIERLEQEKADLSEEIKDIFQDASSHGFDVKAMKTVLKLKKLDKDKLAEQDAMLELYRDTLGI</sequence>
<dbReference type="EMBL" id="CP000087">
    <property type="protein sequence ID" value="ABE05266.1"/>
    <property type="molecule type" value="Genomic_DNA"/>
</dbReference>
<dbReference type="RefSeq" id="WP_011477844.1">
    <property type="nucleotide sequence ID" value="NC_007940.1"/>
</dbReference>
<dbReference type="SMR" id="Q1RH98"/>
<dbReference type="KEGG" id="rbe:RBE_1185"/>
<dbReference type="eggNOG" id="COG3750">
    <property type="taxonomic scope" value="Bacteria"/>
</dbReference>
<dbReference type="HOGENOM" id="CLU_158651_4_0_5"/>
<dbReference type="OrthoDB" id="9813793at2"/>
<dbReference type="Proteomes" id="UP000001951">
    <property type="component" value="Chromosome"/>
</dbReference>
<dbReference type="GO" id="GO:0003677">
    <property type="term" value="F:DNA binding"/>
    <property type="evidence" value="ECO:0007669"/>
    <property type="project" value="InterPro"/>
</dbReference>
<dbReference type="HAMAP" id="MF_00797">
    <property type="entry name" value="UPF0335"/>
    <property type="match status" value="1"/>
</dbReference>
<dbReference type="InterPro" id="IPR018753">
    <property type="entry name" value="GapR-like"/>
</dbReference>
<dbReference type="InterPro" id="IPR046367">
    <property type="entry name" value="GapR-like_DNA-bd"/>
</dbReference>
<dbReference type="NCBIfam" id="NF010247">
    <property type="entry name" value="PRK13694.1"/>
    <property type="match status" value="1"/>
</dbReference>
<dbReference type="Pfam" id="PF10073">
    <property type="entry name" value="GapR_DNA-bd"/>
    <property type="match status" value="1"/>
</dbReference>
<comment type="similarity">
    <text evidence="1">Belongs to the UPF0335 family.</text>
</comment>
<name>Y1185_RICBR</name>
<organism>
    <name type="scientific">Rickettsia bellii (strain RML369-C)</name>
    <dbReference type="NCBI Taxonomy" id="336407"/>
    <lineage>
        <taxon>Bacteria</taxon>
        <taxon>Pseudomonadati</taxon>
        <taxon>Pseudomonadota</taxon>
        <taxon>Alphaproteobacteria</taxon>
        <taxon>Rickettsiales</taxon>
        <taxon>Rickettsiaceae</taxon>
        <taxon>Rickettsieae</taxon>
        <taxon>Rickettsia</taxon>
        <taxon>belli group</taxon>
    </lineage>
</organism>